<accession>A4SCQ6</accession>
<gene>
    <name evidence="1" type="primary">fusA</name>
    <name type="ordered locus">Cvib_0243</name>
</gene>
<feature type="chain" id="PRO_1000074967" description="Elongation factor G">
    <location>
        <begin position="1"/>
        <end position="704"/>
    </location>
</feature>
<feature type="domain" description="tr-type G">
    <location>
        <begin position="8"/>
        <end position="291"/>
    </location>
</feature>
<feature type="binding site" evidence="1">
    <location>
        <begin position="17"/>
        <end position="24"/>
    </location>
    <ligand>
        <name>GTP</name>
        <dbReference type="ChEBI" id="CHEBI:37565"/>
    </ligand>
</feature>
<feature type="binding site" evidence="1">
    <location>
        <begin position="90"/>
        <end position="94"/>
    </location>
    <ligand>
        <name>GTP</name>
        <dbReference type="ChEBI" id="CHEBI:37565"/>
    </ligand>
</feature>
<feature type="binding site" evidence="1">
    <location>
        <begin position="144"/>
        <end position="147"/>
    </location>
    <ligand>
        <name>GTP</name>
        <dbReference type="ChEBI" id="CHEBI:37565"/>
    </ligand>
</feature>
<protein>
    <recommendedName>
        <fullName evidence="1">Elongation factor G</fullName>
        <shortName evidence="1">EF-G</shortName>
    </recommendedName>
</protein>
<proteinExistence type="inferred from homology"/>
<dbReference type="EMBL" id="CP000607">
    <property type="protein sequence ID" value="ABP36265.1"/>
    <property type="molecule type" value="Genomic_DNA"/>
</dbReference>
<dbReference type="SMR" id="A4SCQ6"/>
<dbReference type="STRING" id="290318.Cvib_0243"/>
<dbReference type="KEGG" id="pvi:Cvib_0243"/>
<dbReference type="eggNOG" id="COG0480">
    <property type="taxonomic scope" value="Bacteria"/>
</dbReference>
<dbReference type="HOGENOM" id="CLU_002794_4_1_10"/>
<dbReference type="OrthoDB" id="9801591at2"/>
<dbReference type="GO" id="GO:0005737">
    <property type="term" value="C:cytoplasm"/>
    <property type="evidence" value="ECO:0007669"/>
    <property type="project" value="UniProtKB-SubCell"/>
</dbReference>
<dbReference type="GO" id="GO:0005525">
    <property type="term" value="F:GTP binding"/>
    <property type="evidence" value="ECO:0007669"/>
    <property type="project" value="UniProtKB-UniRule"/>
</dbReference>
<dbReference type="GO" id="GO:0003924">
    <property type="term" value="F:GTPase activity"/>
    <property type="evidence" value="ECO:0007669"/>
    <property type="project" value="InterPro"/>
</dbReference>
<dbReference type="GO" id="GO:0003746">
    <property type="term" value="F:translation elongation factor activity"/>
    <property type="evidence" value="ECO:0007669"/>
    <property type="project" value="UniProtKB-UniRule"/>
</dbReference>
<dbReference type="GO" id="GO:0032790">
    <property type="term" value="P:ribosome disassembly"/>
    <property type="evidence" value="ECO:0007669"/>
    <property type="project" value="TreeGrafter"/>
</dbReference>
<dbReference type="CDD" id="cd01886">
    <property type="entry name" value="EF-G"/>
    <property type="match status" value="1"/>
</dbReference>
<dbReference type="CDD" id="cd16262">
    <property type="entry name" value="EFG_III"/>
    <property type="match status" value="1"/>
</dbReference>
<dbReference type="CDD" id="cd01434">
    <property type="entry name" value="EFG_mtEFG1_IV"/>
    <property type="match status" value="1"/>
</dbReference>
<dbReference type="CDD" id="cd03713">
    <property type="entry name" value="EFG_mtEFG_C"/>
    <property type="match status" value="1"/>
</dbReference>
<dbReference type="CDD" id="cd04088">
    <property type="entry name" value="EFG_mtEFG_II"/>
    <property type="match status" value="1"/>
</dbReference>
<dbReference type="FunFam" id="2.40.30.10:FF:000006">
    <property type="entry name" value="Elongation factor G"/>
    <property type="match status" value="1"/>
</dbReference>
<dbReference type="FunFam" id="3.30.230.10:FF:000003">
    <property type="entry name" value="Elongation factor G"/>
    <property type="match status" value="1"/>
</dbReference>
<dbReference type="FunFam" id="3.30.70.240:FF:000001">
    <property type="entry name" value="Elongation factor G"/>
    <property type="match status" value="1"/>
</dbReference>
<dbReference type="FunFam" id="3.30.70.870:FF:000001">
    <property type="entry name" value="Elongation factor G"/>
    <property type="match status" value="1"/>
</dbReference>
<dbReference type="FunFam" id="3.40.50.300:FF:000029">
    <property type="entry name" value="Elongation factor G"/>
    <property type="match status" value="1"/>
</dbReference>
<dbReference type="Gene3D" id="3.30.230.10">
    <property type="match status" value="1"/>
</dbReference>
<dbReference type="Gene3D" id="3.30.70.240">
    <property type="match status" value="1"/>
</dbReference>
<dbReference type="Gene3D" id="3.30.70.870">
    <property type="entry name" value="Elongation Factor G (Translational Gtpase), domain 3"/>
    <property type="match status" value="1"/>
</dbReference>
<dbReference type="Gene3D" id="3.40.50.300">
    <property type="entry name" value="P-loop containing nucleotide triphosphate hydrolases"/>
    <property type="match status" value="1"/>
</dbReference>
<dbReference type="Gene3D" id="2.40.30.10">
    <property type="entry name" value="Translation factors"/>
    <property type="match status" value="1"/>
</dbReference>
<dbReference type="HAMAP" id="MF_00054_B">
    <property type="entry name" value="EF_G_EF_2_B"/>
    <property type="match status" value="1"/>
</dbReference>
<dbReference type="InterPro" id="IPR041095">
    <property type="entry name" value="EFG_II"/>
</dbReference>
<dbReference type="InterPro" id="IPR009022">
    <property type="entry name" value="EFG_III"/>
</dbReference>
<dbReference type="InterPro" id="IPR035647">
    <property type="entry name" value="EFG_III/V"/>
</dbReference>
<dbReference type="InterPro" id="IPR047872">
    <property type="entry name" value="EFG_IV"/>
</dbReference>
<dbReference type="InterPro" id="IPR035649">
    <property type="entry name" value="EFG_V"/>
</dbReference>
<dbReference type="InterPro" id="IPR000640">
    <property type="entry name" value="EFG_V-like"/>
</dbReference>
<dbReference type="InterPro" id="IPR004161">
    <property type="entry name" value="EFTu-like_2"/>
</dbReference>
<dbReference type="InterPro" id="IPR031157">
    <property type="entry name" value="G_TR_CS"/>
</dbReference>
<dbReference type="InterPro" id="IPR027417">
    <property type="entry name" value="P-loop_NTPase"/>
</dbReference>
<dbReference type="InterPro" id="IPR020568">
    <property type="entry name" value="Ribosomal_Su5_D2-typ_SF"/>
</dbReference>
<dbReference type="InterPro" id="IPR014721">
    <property type="entry name" value="Ribsml_uS5_D2-typ_fold_subgr"/>
</dbReference>
<dbReference type="InterPro" id="IPR005225">
    <property type="entry name" value="Small_GTP-bd"/>
</dbReference>
<dbReference type="InterPro" id="IPR000795">
    <property type="entry name" value="T_Tr_GTP-bd_dom"/>
</dbReference>
<dbReference type="InterPro" id="IPR009000">
    <property type="entry name" value="Transl_B-barrel_sf"/>
</dbReference>
<dbReference type="InterPro" id="IPR004540">
    <property type="entry name" value="Transl_elong_EFG/EF2"/>
</dbReference>
<dbReference type="InterPro" id="IPR005517">
    <property type="entry name" value="Transl_elong_EFG/EF2_IV"/>
</dbReference>
<dbReference type="NCBIfam" id="TIGR00484">
    <property type="entry name" value="EF-G"/>
    <property type="match status" value="1"/>
</dbReference>
<dbReference type="NCBIfam" id="NF009381">
    <property type="entry name" value="PRK12740.1-5"/>
    <property type="match status" value="1"/>
</dbReference>
<dbReference type="NCBIfam" id="TIGR00231">
    <property type="entry name" value="small_GTP"/>
    <property type="match status" value="1"/>
</dbReference>
<dbReference type="PANTHER" id="PTHR43261:SF1">
    <property type="entry name" value="RIBOSOME-RELEASING FACTOR 2, MITOCHONDRIAL"/>
    <property type="match status" value="1"/>
</dbReference>
<dbReference type="PANTHER" id="PTHR43261">
    <property type="entry name" value="TRANSLATION ELONGATION FACTOR G-RELATED"/>
    <property type="match status" value="1"/>
</dbReference>
<dbReference type="Pfam" id="PF00679">
    <property type="entry name" value="EFG_C"/>
    <property type="match status" value="1"/>
</dbReference>
<dbReference type="Pfam" id="PF14492">
    <property type="entry name" value="EFG_III"/>
    <property type="match status" value="1"/>
</dbReference>
<dbReference type="Pfam" id="PF03764">
    <property type="entry name" value="EFG_IV"/>
    <property type="match status" value="1"/>
</dbReference>
<dbReference type="Pfam" id="PF00009">
    <property type="entry name" value="GTP_EFTU"/>
    <property type="match status" value="1"/>
</dbReference>
<dbReference type="Pfam" id="PF03144">
    <property type="entry name" value="GTP_EFTU_D2"/>
    <property type="match status" value="1"/>
</dbReference>
<dbReference type="PRINTS" id="PR00315">
    <property type="entry name" value="ELONGATNFCT"/>
</dbReference>
<dbReference type="SMART" id="SM00838">
    <property type="entry name" value="EFG_C"/>
    <property type="match status" value="1"/>
</dbReference>
<dbReference type="SMART" id="SM00889">
    <property type="entry name" value="EFG_IV"/>
    <property type="match status" value="1"/>
</dbReference>
<dbReference type="SUPFAM" id="SSF54980">
    <property type="entry name" value="EF-G C-terminal domain-like"/>
    <property type="match status" value="2"/>
</dbReference>
<dbReference type="SUPFAM" id="SSF52540">
    <property type="entry name" value="P-loop containing nucleoside triphosphate hydrolases"/>
    <property type="match status" value="1"/>
</dbReference>
<dbReference type="SUPFAM" id="SSF54211">
    <property type="entry name" value="Ribosomal protein S5 domain 2-like"/>
    <property type="match status" value="1"/>
</dbReference>
<dbReference type="SUPFAM" id="SSF50447">
    <property type="entry name" value="Translation proteins"/>
    <property type="match status" value="1"/>
</dbReference>
<dbReference type="PROSITE" id="PS00301">
    <property type="entry name" value="G_TR_1"/>
    <property type="match status" value="1"/>
</dbReference>
<dbReference type="PROSITE" id="PS51722">
    <property type="entry name" value="G_TR_2"/>
    <property type="match status" value="1"/>
</dbReference>
<comment type="function">
    <text evidence="1">Catalyzes the GTP-dependent ribosomal translocation step during translation elongation. During this step, the ribosome changes from the pre-translocational (PRE) to the post-translocational (POST) state as the newly formed A-site-bound peptidyl-tRNA and P-site-bound deacylated tRNA move to the P and E sites, respectively. Catalyzes the coordinated movement of the two tRNA molecules, the mRNA and conformational changes in the ribosome.</text>
</comment>
<comment type="subcellular location">
    <subcellularLocation>
        <location evidence="1">Cytoplasm</location>
    </subcellularLocation>
</comment>
<comment type="similarity">
    <text evidence="1">Belongs to the TRAFAC class translation factor GTPase superfamily. Classic translation factor GTPase family. EF-G/EF-2 subfamily.</text>
</comment>
<organism>
    <name type="scientific">Chlorobium phaeovibrioides (strain DSM 265 / 1930)</name>
    <name type="common">Prosthecochloris vibrioformis (strain DSM 265)</name>
    <dbReference type="NCBI Taxonomy" id="290318"/>
    <lineage>
        <taxon>Bacteria</taxon>
        <taxon>Pseudomonadati</taxon>
        <taxon>Chlorobiota</taxon>
        <taxon>Chlorobiia</taxon>
        <taxon>Chlorobiales</taxon>
        <taxon>Chlorobiaceae</taxon>
        <taxon>Chlorobium/Pelodictyon group</taxon>
        <taxon>Chlorobium</taxon>
    </lineage>
</organism>
<keyword id="KW-0963">Cytoplasm</keyword>
<keyword id="KW-0251">Elongation factor</keyword>
<keyword id="KW-0342">GTP-binding</keyword>
<keyword id="KW-0547">Nucleotide-binding</keyword>
<keyword id="KW-0648">Protein biosynthesis</keyword>
<sequence length="704" mass="78045">MTRQVALDKVRNIGIMAHIDAGKTTTTERILYYTGRLHRMGEVHDGGATMDWMEQEKERGITITSAATTCFWSPKYGNYKGENHRINIIDTPGHVDFTVEVERSLRVLDGAVALFCAVGGVEPQSETVWRQANKYGVPRIAYINKMDRTGADFFDTIKAIRERLNSNPVPLQIPIGEGEIYAGFVDLIRMKGIIFDKEDGSTYEEVEIPHDLENEARTWRINMLEAVSEVDETLLEKYLNGEDITESEVRKVLRQATLNVDIIPVLCGSSFKNKGVQFMLDAVVDYLASPLDDGEVEGHHPRTEEDVVRHPSDDEPFAALAFKIATDPFVGKLTFFRVYSGMLKAGSYVLNSITGKKERVGRVLQMHSNKREDLDAVYAGDIAAAVGLKEVRTGDTLCDEASPVVLEKMVFPEPVIQIAIEPKTKVDSDKLGVSLAKLAEEDPTFRVKTDDETGQTLIAGMGELHLEILVDRLRREFKVEANVGQPQVAYRETIRSKVDFEGKFVRQSGGKGQFGLVNITVEPLEEGKGYEFVDAVKGGVIPREYIPAVNAGIQEAMKDGVVAGYPMQDIKVTLFDGKYHDVDSSEMAFKIAGSIGFKGGARKANPVLLEPIMKVEVVTPEEYLGDVMGDLSGRRGHIEGMGQRAGAQFVGAKVPLSAMFGYSTDLRSMTQGRANYSMEFESYREVPKNIAETLQEKRSSKDAQ</sequence>
<reference key="1">
    <citation type="submission" date="2007-03" db="EMBL/GenBank/DDBJ databases">
        <title>Complete sequence of Prosthecochloris vibrioformis DSM 265.</title>
        <authorList>
            <consortium name="US DOE Joint Genome Institute"/>
            <person name="Copeland A."/>
            <person name="Lucas S."/>
            <person name="Lapidus A."/>
            <person name="Barry K."/>
            <person name="Detter J.C."/>
            <person name="Glavina del Rio T."/>
            <person name="Hammon N."/>
            <person name="Israni S."/>
            <person name="Pitluck S."/>
            <person name="Schmutz J."/>
            <person name="Larimer F."/>
            <person name="Land M."/>
            <person name="Hauser L."/>
            <person name="Mikhailova N."/>
            <person name="Li T."/>
            <person name="Overmann J."/>
            <person name="Schuster S.C."/>
            <person name="Bryant D.A."/>
            <person name="Richardson P."/>
        </authorList>
    </citation>
    <scope>NUCLEOTIDE SEQUENCE [LARGE SCALE GENOMIC DNA]</scope>
    <source>
        <strain>DSM 265 / 1930</strain>
    </source>
</reference>
<name>EFG_CHLPM</name>
<evidence type="ECO:0000255" key="1">
    <source>
        <dbReference type="HAMAP-Rule" id="MF_00054"/>
    </source>
</evidence>